<accession>P67689</accession>
<accession>Q8XGI2</accession>
<gene>
    <name evidence="1" type="primary">prmA</name>
    <name type="ordered locus">STY3563</name>
    <name type="ordered locus">t3298</name>
</gene>
<evidence type="ECO:0000255" key="1">
    <source>
        <dbReference type="HAMAP-Rule" id="MF_00735"/>
    </source>
</evidence>
<reference key="1">
    <citation type="journal article" date="2001" name="Nature">
        <title>Complete genome sequence of a multiple drug resistant Salmonella enterica serovar Typhi CT18.</title>
        <authorList>
            <person name="Parkhill J."/>
            <person name="Dougan G."/>
            <person name="James K.D."/>
            <person name="Thomson N.R."/>
            <person name="Pickard D."/>
            <person name="Wain J."/>
            <person name="Churcher C.M."/>
            <person name="Mungall K.L."/>
            <person name="Bentley S.D."/>
            <person name="Holden M.T.G."/>
            <person name="Sebaihia M."/>
            <person name="Baker S."/>
            <person name="Basham D."/>
            <person name="Brooks K."/>
            <person name="Chillingworth T."/>
            <person name="Connerton P."/>
            <person name="Cronin A."/>
            <person name="Davis P."/>
            <person name="Davies R.M."/>
            <person name="Dowd L."/>
            <person name="White N."/>
            <person name="Farrar J."/>
            <person name="Feltwell T."/>
            <person name="Hamlin N."/>
            <person name="Haque A."/>
            <person name="Hien T.T."/>
            <person name="Holroyd S."/>
            <person name="Jagels K."/>
            <person name="Krogh A."/>
            <person name="Larsen T.S."/>
            <person name="Leather S."/>
            <person name="Moule S."/>
            <person name="O'Gaora P."/>
            <person name="Parry C."/>
            <person name="Quail M.A."/>
            <person name="Rutherford K.M."/>
            <person name="Simmonds M."/>
            <person name="Skelton J."/>
            <person name="Stevens K."/>
            <person name="Whitehead S."/>
            <person name="Barrell B.G."/>
        </authorList>
    </citation>
    <scope>NUCLEOTIDE SEQUENCE [LARGE SCALE GENOMIC DNA]</scope>
    <source>
        <strain>CT18</strain>
    </source>
</reference>
<reference key="2">
    <citation type="journal article" date="2003" name="J. Bacteriol.">
        <title>Comparative genomics of Salmonella enterica serovar Typhi strains Ty2 and CT18.</title>
        <authorList>
            <person name="Deng W."/>
            <person name="Liou S.-R."/>
            <person name="Plunkett G. III"/>
            <person name="Mayhew G.F."/>
            <person name="Rose D.J."/>
            <person name="Burland V."/>
            <person name="Kodoyianni V."/>
            <person name="Schwartz D.C."/>
            <person name="Blattner F.R."/>
        </authorList>
    </citation>
    <scope>NUCLEOTIDE SEQUENCE [LARGE SCALE GENOMIC DNA]</scope>
    <source>
        <strain>ATCC 700931 / Ty2</strain>
    </source>
</reference>
<keyword id="KW-0963">Cytoplasm</keyword>
<keyword id="KW-0489">Methyltransferase</keyword>
<keyword id="KW-0949">S-adenosyl-L-methionine</keyword>
<keyword id="KW-0808">Transferase</keyword>
<dbReference type="EC" id="2.1.1.-" evidence="1"/>
<dbReference type="EMBL" id="AL513382">
    <property type="protein sequence ID" value="CAD07898.1"/>
    <property type="molecule type" value="Genomic_DNA"/>
</dbReference>
<dbReference type="EMBL" id="AE014613">
    <property type="protein sequence ID" value="AAO70833.1"/>
    <property type="molecule type" value="Genomic_DNA"/>
</dbReference>
<dbReference type="RefSeq" id="NP_457759.1">
    <property type="nucleotide sequence ID" value="NC_003198.1"/>
</dbReference>
<dbReference type="RefSeq" id="WP_001145849.1">
    <property type="nucleotide sequence ID" value="NZ_WSUR01000038.1"/>
</dbReference>
<dbReference type="SMR" id="P67689"/>
<dbReference type="STRING" id="220341.gene:17587411"/>
<dbReference type="KEGG" id="stt:t3298"/>
<dbReference type="KEGG" id="sty:STY3563"/>
<dbReference type="PATRIC" id="fig|220341.7.peg.3628"/>
<dbReference type="eggNOG" id="COG2264">
    <property type="taxonomic scope" value="Bacteria"/>
</dbReference>
<dbReference type="HOGENOM" id="CLU_049382_4_1_6"/>
<dbReference type="OMA" id="MYYEFFF"/>
<dbReference type="OrthoDB" id="9785995at2"/>
<dbReference type="Proteomes" id="UP000000541">
    <property type="component" value="Chromosome"/>
</dbReference>
<dbReference type="Proteomes" id="UP000002670">
    <property type="component" value="Chromosome"/>
</dbReference>
<dbReference type="GO" id="GO:0005829">
    <property type="term" value="C:cytosol"/>
    <property type="evidence" value="ECO:0007669"/>
    <property type="project" value="TreeGrafter"/>
</dbReference>
<dbReference type="GO" id="GO:0016279">
    <property type="term" value="F:protein-lysine N-methyltransferase activity"/>
    <property type="evidence" value="ECO:0007669"/>
    <property type="project" value="TreeGrafter"/>
</dbReference>
<dbReference type="GO" id="GO:0032259">
    <property type="term" value="P:methylation"/>
    <property type="evidence" value="ECO:0007669"/>
    <property type="project" value="UniProtKB-KW"/>
</dbReference>
<dbReference type="CDD" id="cd02440">
    <property type="entry name" value="AdoMet_MTases"/>
    <property type="match status" value="1"/>
</dbReference>
<dbReference type="FunFam" id="3.40.50.150:FF:000021">
    <property type="entry name" value="Ribosomal protein L11 methyltransferase"/>
    <property type="match status" value="1"/>
</dbReference>
<dbReference type="Gene3D" id="3.40.50.150">
    <property type="entry name" value="Vaccinia Virus protein VP39"/>
    <property type="match status" value="1"/>
</dbReference>
<dbReference type="HAMAP" id="MF_00735">
    <property type="entry name" value="Methyltr_PrmA"/>
    <property type="match status" value="1"/>
</dbReference>
<dbReference type="InterPro" id="IPR050078">
    <property type="entry name" value="Ribosomal_L11_MeTrfase_PrmA"/>
</dbReference>
<dbReference type="InterPro" id="IPR004498">
    <property type="entry name" value="Ribosomal_PrmA_MeTrfase"/>
</dbReference>
<dbReference type="InterPro" id="IPR029063">
    <property type="entry name" value="SAM-dependent_MTases_sf"/>
</dbReference>
<dbReference type="NCBIfam" id="TIGR00406">
    <property type="entry name" value="prmA"/>
    <property type="match status" value="1"/>
</dbReference>
<dbReference type="PANTHER" id="PTHR43648">
    <property type="entry name" value="ELECTRON TRANSFER FLAVOPROTEIN BETA SUBUNIT LYSINE METHYLTRANSFERASE"/>
    <property type="match status" value="1"/>
</dbReference>
<dbReference type="PANTHER" id="PTHR43648:SF1">
    <property type="entry name" value="ELECTRON TRANSFER FLAVOPROTEIN BETA SUBUNIT LYSINE METHYLTRANSFERASE"/>
    <property type="match status" value="1"/>
</dbReference>
<dbReference type="Pfam" id="PF06325">
    <property type="entry name" value="PrmA"/>
    <property type="match status" value="1"/>
</dbReference>
<dbReference type="PIRSF" id="PIRSF000401">
    <property type="entry name" value="RPL11_MTase"/>
    <property type="match status" value="1"/>
</dbReference>
<dbReference type="SUPFAM" id="SSF53335">
    <property type="entry name" value="S-adenosyl-L-methionine-dependent methyltransferases"/>
    <property type="match status" value="1"/>
</dbReference>
<comment type="function">
    <text evidence="1">Methylates ribosomal protein L11.</text>
</comment>
<comment type="catalytic activity">
    <reaction evidence="1">
        <text>L-lysyl-[protein] + 3 S-adenosyl-L-methionine = N(6),N(6),N(6)-trimethyl-L-lysyl-[protein] + 3 S-adenosyl-L-homocysteine + 3 H(+)</text>
        <dbReference type="Rhea" id="RHEA:54192"/>
        <dbReference type="Rhea" id="RHEA-COMP:9752"/>
        <dbReference type="Rhea" id="RHEA-COMP:13826"/>
        <dbReference type="ChEBI" id="CHEBI:15378"/>
        <dbReference type="ChEBI" id="CHEBI:29969"/>
        <dbReference type="ChEBI" id="CHEBI:57856"/>
        <dbReference type="ChEBI" id="CHEBI:59789"/>
        <dbReference type="ChEBI" id="CHEBI:61961"/>
    </reaction>
</comment>
<comment type="subcellular location">
    <subcellularLocation>
        <location evidence="1">Cytoplasm</location>
    </subcellularLocation>
</comment>
<comment type="similarity">
    <text evidence="1">Belongs to the methyltransferase superfamily. PrmA family.</text>
</comment>
<proteinExistence type="inferred from homology"/>
<sequence>MPWIQLKLNTTGANAEELSDALMEAGAVSITFQDTHDTPVFEPLPGETRLWGDTDVIGLFDAETDMKDVVAILEQHPLLGAGFAHKIEQLEDKDWEREWMDNFHPMRFGERLWICPSWRDIPDENAVNVMLDPGLAFGTGTHPTTSLCLQWLDGLDLNGKTVIDFGCGSGILAIAALKLGAAKAIGIDIDPQAIQASRDNAERNGVSDRLELYLPKDQPEAMKADVVVANILAGPLRELAPLISVLPVEGGLLGLSGILASQAESVCDAYAELFTLDPVVEKEEWCRITGRKK</sequence>
<organism>
    <name type="scientific">Salmonella typhi</name>
    <dbReference type="NCBI Taxonomy" id="90370"/>
    <lineage>
        <taxon>Bacteria</taxon>
        <taxon>Pseudomonadati</taxon>
        <taxon>Pseudomonadota</taxon>
        <taxon>Gammaproteobacteria</taxon>
        <taxon>Enterobacterales</taxon>
        <taxon>Enterobacteriaceae</taxon>
        <taxon>Salmonella</taxon>
    </lineage>
</organism>
<feature type="chain" id="PRO_0000192299" description="Ribosomal protein L11 methyltransferase">
    <location>
        <begin position="1"/>
        <end position="293"/>
    </location>
</feature>
<feature type="binding site" evidence="1">
    <location>
        <position position="145"/>
    </location>
    <ligand>
        <name>S-adenosyl-L-methionine</name>
        <dbReference type="ChEBI" id="CHEBI:59789"/>
    </ligand>
</feature>
<feature type="binding site" evidence="1">
    <location>
        <position position="166"/>
    </location>
    <ligand>
        <name>S-adenosyl-L-methionine</name>
        <dbReference type="ChEBI" id="CHEBI:59789"/>
    </ligand>
</feature>
<feature type="binding site" evidence="1">
    <location>
        <position position="188"/>
    </location>
    <ligand>
        <name>S-adenosyl-L-methionine</name>
        <dbReference type="ChEBI" id="CHEBI:59789"/>
    </ligand>
</feature>
<feature type="binding site" evidence="1">
    <location>
        <position position="230"/>
    </location>
    <ligand>
        <name>S-adenosyl-L-methionine</name>
        <dbReference type="ChEBI" id="CHEBI:59789"/>
    </ligand>
</feature>
<protein>
    <recommendedName>
        <fullName evidence="1">Ribosomal protein L11 methyltransferase</fullName>
        <shortName evidence="1">L11 Mtase</shortName>
        <ecNumber evidence="1">2.1.1.-</ecNumber>
    </recommendedName>
</protein>
<name>PRMA_SALTI</name>